<protein>
    <recommendedName>
        <fullName evidence="1">Rhamnulose-1-phosphate aldolase</fullName>
        <ecNumber evidence="1">4.1.2.19</ecNumber>
    </recommendedName>
</protein>
<keyword id="KW-0963">Cytoplasm</keyword>
<keyword id="KW-0456">Lyase</keyword>
<keyword id="KW-0479">Metal-binding</keyword>
<keyword id="KW-1185">Reference proteome</keyword>
<keyword id="KW-0684">Rhamnose metabolism</keyword>
<keyword id="KW-0862">Zinc</keyword>
<comment type="function">
    <text evidence="1">Catalyzes the reversible cleavage of L-rhamnulose-1-phosphate to dihydroxyacetone phosphate (DHAP) and L-lactaldehyde.</text>
</comment>
<comment type="catalytic activity">
    <reaction evidence="1">
        <text>L-rhamnulose 1-phosphate = (S)-lactaldehyde + dihydroxyacetone phosphate</text>
        <dbReference type="Rhea" id="RHEA:19689"/>
        <dbReference type="ChEBI" id="CHEBI:18041"/>
        <dbReference type="ChEBI" id="CHEBI:57642"/>
        <dbReference type="ChEBI" id="CHEBI:58313"/>
        <dbReference type="EC" id="4.1.2.19"/>
    </reaction>
</comment>
<comment type="cofactor">
    <cofactor evidence="1">
        <name>Zn(2+)</name>
        <dbReference type="ChEBI" id="CHEBI:29105"/>
    </cofactor>
    <text evidence="1">Binds 1 zinc ion per subunit.</text>
</comment>
<comment type="pathway">
    <text evidence="1">Carbohydrate degradation; L-rhamnose degradation; glycerone phosphate from L-rhamnose: step 3/3.</text>
</comment>
<comment type="subunit">
    <text evidence="1">Homotetramer.</text>
</comment>
<comment type="subcellular location">
    <subcellularLocation>
        <location evidence="1">Cytoplasm</location>
    </subcellularLocation>
</comment>
<comment type="similarity">
    <text evidence="1">Belongs to the aldolase class II family. RhaD subfamily.</text>
</comment>
<accession>B7MI34</accession>
<evidence type="ECO:0000255" key="1">
    <source>
        <dbReference type="HAMAP-Rule" id="MF_00770"/>
    </source>
</evidence>
<organism>
    <name type="scientific">Escherichia coli O45:K1 (strain S88 / ExPEC)</name>
    <dbReference type="NCBI Taxonomy" id="585035"/>
    <lineage>
        <taxon>Bacteria</taxon>
        <taxon>Pseudomonadati</taxon>
        <taxon>Pseudomonadota</taxon>
        <taxon>Gammaproteobacteria</taxon>
        <taxon>Enterobacterales</taxon>
        <taxon>Enterobacteriaceae</taxon>
        <taxon>Escherichia</taxon>
    </lineage>
</organism>
<proteinExistence type="inferred from homology"/>
<sequence>MQNITQSWFVQGMIKATTDAWLKGWDERNGGNLTLRLDDADIAPYHDNFHQQPRYIPLSQPMPLLANTPFIVTGSGKFFRNVQLDPAANLGIVKVDSDGAGYHILWGLTNEAVPTSELPAHFLSHCERIKATNGKDRVIMHCHATNLIALTYVLENDTAVFTRQLWEGSTECLVVFPDGVGILPWMVPGTDEIGQATAQEMQKHSLVLWPFHGVFGSGPTLDETFGLIDTAEKSAQILVKVYSMGGMKQTISREELIALGQRFGVTPLASALAL</sequence>
<feature type="chain" id="PRO_1000193726" description="Rhamnulose-1-phosphate aldolase">
    <location>
        <begin position="1"/>
        <end position="274"/>
    </location>
</feature>
<feature type="active site" evidence="1">
    <location>
        <position position="117"/>
    </location>
</feature>
<feature type="binding site" evidence="1">
    <location>
        <position position="141"/>
    </location>
    <ligand>
        <name>Zn(2+)</name>
        <dbReference type="ChEBI" id="CHEBI:29105"/>
    </ligand>
</feature>
<feature type="binding site" evidence="1">
    <location>
        <position position="143"/>
    </location>
    <ligand>
        <name>Zn(2+)</name>
        <dbReference type="ChEBI" id="CHEBI:29105"/>
    </ligand>
</feature>
<feature type="binding site" evidence="1">
    <location>
        <position position="212"/>
    </location>
    <ligand>
        <name>Zn(2+)</name>
        <dbReference type="ChEBI" id="CHEBI:29105"/>
    </ligand>
</feature>
<reference key="1">
    <citation type="journal article" date="2009" name="PLoS Genet.">
        <title>Organised genome dynamics in the Escherichia coli species results in highly diverse adaptive paths.</title>
        <authorList>
            <person name="Touchon M."/>
            <person name="Hoede C."/>
            <person name="Tenaillon O."/>
            <person name="Barbe V."/>
            <person name="Baeriswyl S."/>
            <person name="Bidet P."/>
            <person name="Bingen E."/>
            <person name="Bonacorsi S."/>
            <person name="Bouchier C."/>
            <person name="Bouvet O."/>
            <person name="Calteau A."/>
            <person name="Chiapello H."/>
            <person name="Clermont O."/>
            <person name="Cruveiller S."/>
            <person name="Danchin A."/>
            <person name="Diard M."/>
            <person name="Dossat C."/>
            <person name="Karoui M.E."/>
            <person name="Frapy E."/>
            <person name="Garry L."/>
            <person name="Ghigo J.M."/>
            <person name="Gilles A.M."/>
            <person name="Johnson J."/>
            <person name="Le Bouguenec C."/>
            <person name="Lescat M."/>
            <person name="Mangenot S."/>
            <person name="Martinez-Jehanne V."/>
            <person name="Matic I."/>
            <person name="Nassif X."/>
            <person name="Oztas S."/>
            <person name="Petit M.A."/>
            <person name="Pichon C."/>
            <person name="Rouy Z."/>
            <person name="Ruf C.S."/>
            <person name="Schneider D."/>
            <person name="Tourret J."/>
            <person name="Vacherie B."/>
            <person name="Vallenet D."/>
            <person name="Medigue C."/>
            <person name="Rocha E.P.C."/>
            <person name="Denamur E."/>
        </authorList>
    </citation>
    <scope>NUCLEOTIDE SEQUENCE [LARGE SCALE GENOMIC DNA]</scope>
    <source>
        <strain>S88 / ExPEC</strain>
    </source>
</reference>
<dbReference type="EC" id="4.1.2.19" evidence="1"/>
<dbReference type="EMBL" id="CU928161">
    <property type="protein sequence ID" value="CAR05532.1"/>
    <property type="molecule type" value="Genomic_DNA"/>
</dbReference>
<dbReference type="RefSeq" id="WP_001179744.1">
    <property type="nucleotide sequence ID" value="NC_011742.1"/>
</dbReference>
<dbReference type="SMR" id="B7MI34"/>
<dbReference type="KEGG" id="ecz:ECS88_4349"/>
<dbReference type="HOGENOM" id="CLU_076831_0_0_6"/>
<dbReference type="UniPathway" id="UPA00541">
    <property type="reaction ID" value="UER00603"/>
</dbReference>
<dbReference type="Proteomes" id="UP000000747">
    <property type="component" value="Chromosome"/>
</dbReference>
<dbReference type="GO" id="GO:0005829">
    <property type="term" value="C:cytosol"/>
    <property type="evidence" value="ECO:0007669"/>
    <property type="project" value="TreeGrafter"/>
</dbReference>
<dbReference type="GO" id="GO:0046872">
    <property type="term" value="F:metal ion binding"/>
    <property type="evidence" value="ECO:0007669"/>
    <property type="project" value="UniProtKB-KW"/>
</dbReference>
<dbReference type="GO" id="GO:0008994">
    <property type="term" value="F:rhamnulose-1-phosphate aldolase activity"/>
    <property type="evidence" value="ECO:0007669"/>
    <property type="project" value="UniProtKB-UniRule"/>
</dbReference>
<dbReference type="GO" id="GO:0019323">
    <property type="term" value="P:pentose catabolic process"/>
    <property type="evidence" value="ECO:0007669"/>
    <property type="project" value="TreeGrafter"/>
</dbReference>
<dbReference type="GO" id="GO:0019301">
    <property type="term" value="P:rhamnose catabolic process"/>
    <property type="evidence" value="ECO:0007669"/>
    <property type="project" value="UniProtKB-UniRule"/>
</dbReference>
<dbReference type="CDD" id="cd00398">
    <property type="entry name" value="Aldolase_II"/>
    <property type="match status" value="1"/>
</dbReference>
<dbReference type="FunFam" id="3.40.225.10:FF:000006">
    <property type="entry name" value="Rhamnulose-1-phosphate aldolase"/>
    <property type="match status" value="1"/>
</dbReference>
<dbReference type="Gene3D" id="3.40.225.10">
    <property type="entry name" value="Class II aldolase/adducin N-terminal domain"/>
    <property type="match status" value="1"/>
</dbReference>
<dbReference type="HAMAP" id="MF_00770">
    <property type="entry name" value="RhaD"/>
    <property type="match status" value="1"/>
</dbReference>
<dbReference type="InterPro" id="IPR050197">
    <property type="entry name" value="Aldolase_class_II_sugar_metab"/>
</dbReference>
<dbReference type="InterPro" id="IPR001303">
    <property type="entry name" value="Aldolase_II/adducin_N"/>
</dbReference>
<dbReference type="InterPro" id="IPR036409">
    <property type="entry name" value="Aldolase_II/adducin_N_sf"/>
</dbReference>
<dbReference type="InterPro" id="IPR013447">
    <property type="entry name" value="Rhamnulose-1-P_Aldolase"/>
</dbReference>
<dbReference type="NCBIfam" id="NF002963">
    <property type="entry name" value="PRK03634.1"/>
    <property type="match status" value="1"/>
</dbReference>
<dbReference type="NCBIfam" id="TIGR02624">
    <property type="entry name" value="rhamnu_1P_ald"/>
    <property type="match status" value="1"/>
</dbReference>
<dbReference type="PANTHER" id="PTHR22789">
    <property type="entry name" value="FUCULOSE PHOSPHATE ALDOLASE"/>
    <property type="match status" value="1"/>
</dbReference>
<dbReference type="PANTHER" id="PTHR22789:SF16">
    <property type="entry name" value="RHAMNULOSE-1-PHOSPHATE ALDOLASE"/>
    <property type="match status" value="1"/>
</dbReference>
<dbReference type="Pfam" id="PF00596">
    <property type="entry name" value="Aldolase_II"/>
    <property type="match status" value="1"/>
</dbReference>
<dbReference type="SMART" id="SM01007">
    <property type="entry name" value="Aldolase_II"/>
    <property type="match status" value="1"/>
</dbReference>
<dbReference type="SUPFAM" id="SSF53639">
    <property type="entry name" value="AraD/HMP-PK domain-like"/>
    <property type="match status" value="1"/>
</dbReference>
<name>RHAD_ECO45</name>
<gene>
    <name evidence="1" type="primary">rhaD</name>
    <name type="ordered locus">ECS88_4349</name>
</gene>